<feature type="chain" id="PRO_0000345805" description="tRNA modification GTPase MnmE">
    <location>
        <begin position="1"/>
        <end position="461"/>
    </location>
</feature>
<feature type="domain" description="TrmE-type G">
    <location>
        <begin position="224"/>
        <end position="382"/>
    </location>
</feature>
<feature type="binding site" evidence="1">
    <location>
        <position position="27"/>
    </location>
    <ligand>
        <name>(6S)-5-formyl-5,6,7,8-tetrahydrofolate</name>
        <dbReference type="ChEBI" id="CHEBI:57457"/>
    </ligand>
</feature>
<feature type="binding site" evidence="1">
    <location>
        <position position="89"/>
    </location>
    <ligand>
        <name>(6S)-5-formyl-5,6,7,8-tetrahydrofolate</name>
        <dbReference type="ChEBI" id="CHEBI:57457"/>
    </ligand>
</feature>
<feature type="binding site" evidence="1">
    <location>
        <position position="128"/>
    </location>
    <ligand>
        <name>(6S)-5-formyl-5,6,7,8-tetrahydrofolate</name>
        <dbReference type="ChEBI" id="CHEBI:57457"/>
    </ligand>
</feature>
<feature type="binding site" evidence="1">
    <location>
        <begin position="234"/>
        <end position="239"/>
    </location>
    <ligand>
        <name>GTP</name>
        <dbReference type="ChEBI" id="CHEBI:37565"/>
    </ligand>
</feature>
<feature type="binding site" evidence="1">
    <location>
        <position position="234"/>
    </location>
    <ligand>
        <name>K(+)</name>
        <dbReference type="ChEBI" id="CHEBI:29103"/>
    </ligand>
</feature>
<feature type="binding site" evidence="1">
    <location>
        <position position="238"/>
    </location>
    <ligand>
        <name>Mg(2+)</name>
        <dbReference type="ChEBI" id="CHEBI:18420"/>
    </ligand>
</feature>
<feature type="binding site" evidence="1">
    <location>
        <begin position="253"/>
        <end position="259"/>
    </location>
    <ligand>
        <name>GTP</name>
        <dbReference type="ChEBI" id="CHEBI:37565"/>
    </ligand>
</feature>
<feature type="binding site" evidence="1">
    <location>
        <position position="253"/>
    </location>
    <ligand>
        <name>K(+)</name>
        <dbReference type="ChEBI" id="CHEBI:29103"/>
    </ligand>
</feature>
<feature type="binding site" evidence="1">
    <location>
        <position position="255"/>
    </location>
    <ligand>
        <name>K(+)</name>
        <dbReference type="ChEBI" id="CHEBI:29103"/>
    </ligand>
</feature>
<feature type="binding site" evidence="1">
    <location>
        <position position="258"/>
    </location>
    <ligand>
        <name>K(+)</name>
        <dbReference type="ChEBI" id="CHEBI:29103"/>
    </ligand>
</feature>
<feature type="binding site" evidence="1">
    <location>
        <position position="259"/>
    </location>
    <ligand>
        <name>Mg(2+)</name>
        <dbReference type="ChEBI" id="CHEBI:18420"/>
    </ligand>
</feature>
<feature type="binding site" evidence="1">
    <location>
        <begin position="278"/>
        <end position="281"/>
    </location>
    <ligand>
        <name>GTP</name>
        <dbReference type="ChEBI" id="CHEBI:37565"/>
    </ligand>
</feature>
<feature type="binding site" evidence="1">
    <location>
        <position position="461"/>
    </location>
    <ligand>
        <name>(6S)-5-formyl-5,6,7,8-tetrahydrofolate</name>
        <dbReference type="ChEBI" id="CHEBI:57457"/>
    </ligand>
</feature>
<evidence type="ECO:0000255" key="1">
    <source>
        <dbReference type="HAMAP-Rule" id="MF_00379"/>
    </source>
</evidence>
<sequence>MAQVLTEFDTIAAISTPIGEGGISIVRMSGEDAIKIANEVFKGADLAQVPTHTIHYGHIIDPDTGKTIDESMVTVLRAPKTFTCEDIVEINCHGGIVVTNHILQLLLKHGARMADPGEFTKRAFVNGRIDLTQAESVMDIVRAKTDKARQVAVSQLEGGLLHKIRTMRQEILDTLANVEVNIDYPEYDADTVTANQMADTAKSVIEKIDRLLKTAQEGKILRNGLATAIVGQPNVGKSSLLNYLTQSDKAIVTDVAGTTRDTLEEYVSVKGVPLELIDTAGIHHTDDKVEKIGVERSKKALERADLVLLLIDASKELTAEDKSLINETDSKKRIIILNKSDLGQKITVEQMKKLTGSEVISTSILKEDNMDELEELINKLFFAGIENSNDQVMVTNQRQTSLLHKAKSELEDVIQAVDDGIPVDIAQIDFTGAWDTLGEITGESAPDELITQLFSQFCLGK</sequence>
<proteinExistence type="inferred from homology"/>
<keyword id="KW-0963">Cytoplasm</keyword>
<keyword id="KW-0342">GTP-binding</keyword>
<keyword id="KW-0378">Hydrolase</keyword>
<keyword id="KW-0460">Magnesium</keyword>
<keyword id="KW-0479">Metal-binding</keyword>
<keyword id="KW-0547">Nucleotide-binding</keyword>
<keyword id="KW-0630">Potassium</keyword>
<keyword id="KW-1185">Reference proteome</keyword>
<keyword id="KW-0819">tRNA processing</keyword>
<accession>Q5FHQ5</accession>
<gene>
    <name evidence="1" type="primary">mnmE</name>
    <name evidence="1" type="synonym">trmE</name>
    <name type="ordered locus">LBA1976</name>
</gene>
<comment type="function">
    <text evidence="1">Exhibits a very high intrinsic GTPase hydrolysis rate. Involved in the addition of a carboxymethylaminomethyl (cmnm) group at the wobble position (U34) of certain tRNAs, forming tRNA-cmnm(5)s(2)U34.</text>
</comment>
<comment type="cofactor">
    <cofactor evidence="1">
        <name>K(+)</name>
        <dbReference type="ChEBI" id="CHEBI:29103"/>
    </cofactor>
    <text evidence="1">Binds 1 potassium ion per subunit.</text>
</comment>
<comment type="subunit">
    <text evidence="1">Homodimer. Heterotetramer of two MnmE and two MnmG subunits.</text>
</comment>
<comment type="subcellular location">
    <subcellularLocation>
        <location evidence="1">Cytoplasm</location>
    </subcellularLocation>
</comment>
<comment type="similarity">
    <text evidence="1">Belongs to the TRAFAC class TrmE-Era-EngA-EngB-Septin-like GTPase superfamily. TrmE GTPase family.</text>
</comment>
<protein>
    <recommendedName>
        <fullName evidence="1">tRNA modification GTPase MnmE</fullName>
        <ecNumber evidence="1">3.6.-.-</ecNumber>
    </recommendedName>
</protein>
<reference key="1">
    <citation type="journal article" date="2005" name="Proc. Natl. Acad. Sci. U.S.A.">
        <title>Complete genome sequence of the probiotic lactic acid bacterium Lactobacillus acidophilus NCFM.</title>
        <authorList>
            <person name="Altermann E."/>
            <person name="Russell W.M."/>
            <person name="Azcarate-Peril M.A."/>
            <person name="Barrangou R."/>
            <person name="Buck B.L."/>
            <person name="McAuliffe O."/>
            <person name="Souther N."/>
            <person name="Dobson A."/>
            <person name="Duong T."/>
            <person name="Callanan M."/>
            <person name="Lick S."/>
            <person name="Hamrick A."/>
            <person name="Cano R."/>
            <person name="Klaenhammer T.R."/>
        </authorList>
    </citation>
    <scope>NUCLEOTIDE SEQUENCE [LARGE SCALE GENOMIC DNA]</scope>
    <source>
        <strain>ATCC 700396 / NCK56 / N2 / NCFM</strain>
    </source>
</reference>
<organism>
    <name type="scientific">Lactobacillus acidophilus (strain ATCC 700396 / NCK56 / N2 / NCFM)</name>
    <dbReference type="NCBI Taxonomy" id="272621"/>
    <lineage>
        <taxon>Bacteria</taxon>
        <taxon>Bacillati</taxon>
        <taxon>Bacillota</taxon>
        <taxon>Bacilli</taxon>
        <taxon>Lactobacillales</taxon>
        <taxon>Lactobacillaceae</taxon>
        <taxon>Lactobacillus</taxon>
    </lineage>
</organism>
<dbReference type="EC" id="3.6.-.-" evidence="1"/>
<dbReference type="EMBL" id="CP000033">
    <property type="protein sequence ID" value="AAV43769.1"/>
    <property type="molecule type" value="Genomic_DNA"/>
</dbReference>
<dbReference type="RefSeq" id="WP_003549418.1">
    <property type="nucleotide sequence ID" value="NC_006814.3"/>
</dbReference>
<dbReference type="RefSeq" id="YP_194800.1">
    <property type="nucleotide sequence ID" value="NC_006814.3"/>
</dbReference>
<dbReference type="SMR" id="Q5FHQ5"/>
<dbReference type="STRING" id="272621.LBA1976"/>
<dbReference type="GeneID" id="93290890"/>
<dbReference type="KEGG" id="lac:LBA1976"/>
<dbReference type="PATRIC" id="fig|272621.13.peg.1880"/>
<dbReference type="eggNOG" id="COG0486">
    <property type="taxonomic scope" value="Bacteria"/>
</dbReference>
<dbReference type="HOGENOM" id="CLU_019624_4_1_9"/>
<dbReference type="OrthoDB" id="9805918at2"/>
<dbReference type="BioCyc" id="LACI272621:G1G49-1924-MONOMER"/>
<dbReference type="Proteomes" id="UP000006381">
    <property type="component" value="Chromosome"/>
</dbReference>
<dbReference type="GO" id="GO:0005829">
    <property type="term" value="C:cytosol"/>
    <property type="evidence" value="ECO:0007669"/>
    <property type="project" value="TreeGrafter"/>
</dbReference>
<dbReference type="GO" id="GO:0005525">
    <property type="term" value="F:GTP binding"/>
    <property type="evidence" value="ECO:0007669"/>
    <property type="project" value="UniProtKB-UniRule"/>
</dbReference>
<dbReference type="GO" id="GO:0003924">
    <property type="term" value="F:GTPase activity"/>
    <property type="evidence" value="ECO:0007669"/>
    <property type="project" value="UniProtKB-UniRule"/>
</dbReference>
<dbReference type="GO" id="GO:0046872">
    <property type="term" value="F:metal ion binding"/>
    <property type="evidence" value="ECO:0007669"/>
    <property type="project" value="UniProtKB-KW"/>
</dbReference>
<dbReference type="GO" id="GO:0030488">
    <property type="term" value="P:tRNA methylation"/>
    <property type="evidence" value="ECO:0007669"/>
    <property type="project" value="TreeGrafter"/>
</dbReference>
<dbReference type="GO" id="GO:0002098">
    <property type="term" value="P:tRNA wobble uridine modification"/>
    <property type="evidence" value="ECO:0007669"/>
    <property type="project" value="TreeGrafter"/>
</dbReference>
<dbReference type="CDD" id="cd04164">
    <property type="entry name" value="trmE"/>
    <property type="match status" value="1"/>
</dbReference>
<dbReference type="CDD" id="cd14858">
    <property type="entry name" value="TrmE_N"/>
    <property type="match status" value="1"/>
</dbReference>
<dbReference type="FunFam" id="3.30.1360.120:FF:000003">
    <property type="entry name" value="tRNA modification GTPase MnmE"/>
    <property type="match status" value="1"/>
</dbReference>
<dbReference type="FunFam" id="3.40.50.300:FF:000494">
    <property type="entry name" value="tRNA modification GTPase MnmE"/>
    <property type="match status" value="1"/>
</dbReference>
<dbReference type="Gene3D" id="3.40.50.300">
    <property type="entry name" value="P-loop containing nucleotide triphosphate hydrolases"/>
    <property type="match status" value="1"/>
</dbReference>
<dbReference type="Gene3D" id="3.30.1360.120">
    <property type="entry name" value="Probable tRNA modification gtpase trme, domain 1"/>
    <property type="match status" value="1"/>
</dbReference>
<dbReference type="Gene3D" id="1.20.120.430">
    <property type="entry name" value="tRNA modification GTPase MnmE domain 2"/>
    <property type="match status" value="1"/>
</dbReference>
<dbReference type="HAMAP" id="MF_00379">
    <property type="entry name" value="GTPase_MnmE"/>
    <property type="match status" value="1"/>
</dbReference>
<dbReference type="InterPro" id="IPR031168">
    <property type="entry name" value="G_TrmE"/>
</dbReference>
<dbReference type="InterPro" id="IPR006073">
    <property type="entry name" value="GTP-bd"/>
</dbReference>
<dbReference type="InterPro" id="IPR018948">
    <property type="entry name" value="GTP-bd_TrmE_N"/>
</dbReference>
<dbReference type="InterPro" id="IPR004520">
    <property type="entry name" value="GTPase_MnmE"/>
</dbReference>
<dbReference type="InterPro" id="IPR027368">
    <property type="entry name" value="MnmE_dom2"/>
</dbReference>
<dbReference type="InterPro" id="IPR025867">
    <property type="entry name" value="MnmE_helical"/>
</dbReference>
<dbReference type="InterPro" id="IPR027417">
    <property type="entry name" value="P-loop_NTPase"/>
</dbReference>
<dbReference type="InterPro" id="IPR005225">
    <property type="entry name" value="Small_GTP-bd"/>
</dbReference>
<dbReference type="InterPro" id="IPR027266">
    <property type="entry name" value="TrmE/GcvT_dom1"/>
</dbReference>
<dbReference type="NCBIfam" id="TIGR00450">
    <property type="entry name" value="mnmE_trmE_thdF"/>
    <property type="match status" value="1"/>
</dbReference>
<dbReference type="NCBIfam" id="NF003661">
    <property type="entry name" value="PRK05291.1-3"/>
    <property type="match status" value="1"/>
</dbReference>
<dbReference type="NCBIfam" id="TIGR00231">
    <property type="entry name" value="small_GTP"/>
    <property type="match status" value="1"/>
</dbReference>
<dbReference type="PANTHER" id="PTHR42714">
    <property type="entry name" value="TRNA MODIFICATION GTPASE GTPBP3"/>
    <property type="match status" value="1"/>
</dbReference>
<dbReference type="PANTHER" id="PTHR42714:SF2">
    <property type="entry name" value="TRNA MODIFICATION GTPASE GTPBP3, MITOCHONDRIAL"/>
    <property type="match status" value="1"/>
</dbReference>
<dbReference type="Pfam" id="PF01926">
    <property type="entry name" value="MMR_HSR1"/>
    <property type="match status" value="1"/>
</dbReference>
<dbReference type="Pfam" id="PF12631">
    <property type="entry name" value="MnmE_helical"/>
    <property type="match status" value="1"/>
</dbReference>
<dbReference type="Pfam" id="PF10396">
    <property type="entry name" value="TrmE_N"/>
    <property type="match status" value="1"/>
</dbReference>
<dbReference type="PRINTS" id="PR00326">
    <property type="entry name" value="GTP1OBG"/>
</dbReference>
<dbReference type="SUPFAM" id="SSF52540">
    <property type="entry name" value="P-loop containing nucleoside triphosphate hydrolases"/>
    <property type="match status" value="1"/>
</dbReference>
<dbReference type="PROSITE" id="PS51709">
    <property type="entry name" value="G_TRME"/>
    <property type="match status" value="1"/>
</dbReference>
<name>MNME_LACAC</name>